<gene>
    <name evidence="1" type="primary">argR</name>
    <name type="ordered locus">SZO_18750</name>
</gene>
<reference key="1">
    <citation type="journal article" date="2009" name="PLoS Pathog.">
        <title>Genomic evidence for the evolution of Streptococcus equi: host restriction, increased virulence, and genetic exchange with human pathogens.</title>
        <authorList>
            <person name="Holden M.T.G."/>
            <person name="Heather Z."/>
            <person name="Paillot R."/>
            <person name="Steward K.F."/>
            <person name="Webb K."/>
            <person name="Ainslie F."/>
            <person name="Jourdan T."/>
            <person name="Bason N.C."/>
            <person name="Holroyd N.E."/>
            <person name="Mungall K."/>
            <person name="Quail M.A."/>
            <person name="Sanders M."/>
            <person name="Simmonds M."/>
            <person name="Willey D."/>
            <person name="Brooks K."/>
            <person name="Aanensen D.M."/>
            <person name="Spratt B.G."/>
            <person name="Jolley K.A."/>
            <person name="Maiden M.C.J."/>
            <person name="Kehoe M."/>
            <person name="Chanter N."/>
            <person name="Bentley S.D."/>
            <person name="Robinson C."/>
            <person name="Maskell D.J."/>
            <person name="Parkhill J."/>
            <person name="Waller A.S."/>
        </authorList>
    </citation>
    <scope>NUCLEOTIDE SEQUENCE [LARGE SCALE GENOMIC DNA]</scope>
    <source>
        <strain>H70</strain>
    </source>
</reference>
<proteinExistence type="inferred from homology"/>
<comment type="function">
    <text evidence="1">Regulates arginine biosynthesis genes.</text>
</comment>
<comment type="pathway">
    <text>Amino-acid biosynthesis; L-arginine biosynthesis [regulation].</text>
</comment>
<comment type="subcellular location">
    <subcellularLocation>
        <location evidence="1">Cytoplasm</location>
    </subcellularLocation>
</comment>
<comment type="similarity">
    <text evidence="1">Belongs to the ArgR family.</text>
</comment>
<evidence type="ECO:0000255" key="1">
    <source>
        <dbReference type="HAMAP-Rule" id="MF_00173"/>
    </source>
</evidence>
<keyword id="KW-0028">Amino-acid biosynthesis</keyword>
<keyword id="KW-0055">Arginine biosynthesis</keyword>
<keyword id="KW-0963">Cytoplasm</keyword>
<keyword id="KW-0238">DNA-binding</keyword>
<keyword id="KW-0678">Repressor</keyword>
<keyword id="KW-0804">Transcription</keyword>
<keyword id="KW-0805">Transcription regulation</keyword>
<accession>C0MGC7</accession>
<dbReference type="EMBL" id="FM204884">
    <property type="protein sequence ID" value="CAX00814.1"/>
    <property type="molecule type" value="Genomic_DNA"/>
</dbReference>
<dbReference type="SMR" id="C0MGC7"/>
<dbReference type="KEGG" id="seq:SZO_18750"/>
<dbReference type="eggNOG" id="COG1438">
    <property type="taxonomic scope" value="Bacteria"/>
</dbReference>
<dbReference type="HOGENOM" id="CLU_097103_3_0_9"/>
<dbReference type="UniPathway" id="UPA00068"/>
<dbReference type="Proteomes" id="UP000001368">
    <property type="component" value="Chromosome"/>
</dbReference>
<dbReference type="GO" id="GO:0005737">
    <property type="term" value="C:cytoplasm"/>
    <property type="evidence" value="ECO:0007669"/>
    <property type="project" value="UniProtKB-SubCell"/>
</dbReference>
<dbReference type="GO" id="GO:0034618">
    <property type="term" value="F:arginine binding"/>
    <property type="evidence" value="ECO:0007669"/>
    <property type="project" value="InterPro"/>
</dbReference>
<dbReference type="GO" id="GO:0003677">
    <property type="term" value="F:DNA binding"/>
    <property type="evidence" value="ECO:0007669"/>
    <property type="project" value="UniProtKB-KW"/>
</dbReference>
<dbReference type="GO" id="GO:0003700">
    <property type="term" value="F:DNA-binding transcription factor activity"/>
    <property type="evidence" value="ECO:0007669"/>
    <property type="project" value="UniProtKB-UniRule"/>
</dbReference>
<dbReference type="GO" id="GO:0006526">
    <property type="term" value="P:L-arginine biosynthetic process"/>
    <property type="evidence" value="ECO:0007669"/>
    <property type="project" value="UniProtKB-UniPathway"/>
</dbReference>
<dbReference type="GO" id="GO:0051259">
    <property type="term" value="P:protein complex oligomerization"/>
    <property type="evidence" value="ECO:0007669"/>
    <property type="project" value="InterPro"/>
</dbReference>
<dbReference type="GO" id="GO:1900079">
    <property type="term" value="P:regulation of arginine biosynthetic process"/>
    <property type="evidence" value="ECO:0007669"/>
    <property type="project" value="UniProtKB-UniRule"/>
</dbReference>
<dbReference type="Gene3D" id="3.30.1360.40">
    <property type="match status" value="1"/>
</dbReference>
<dbReference type="Gene3D" id="1.10.10.10">
    <property type="entry name" value="Winged helix-like DNA-binding domain superfamily/Winged helix DNA-binding domain"/>
    <property type="match status" value="1"/>
</dbReference>
<dbReference type="HAMAP" id="MF_00173">
    <property type="entry name" value="Arg_repressor"/>
    <property type="match status" value="1"/>
</dbReference>
<dbReference type="InterPro" id="IPR001669">
    <property type="entry name" value="Arg_repress"/>
</dbReference>
<dbReference type="InterPro" id="IPR020899">
    <property type="entry name" value="Arg_repress_C"/>
</dbReference>
<dbReference type="InterPro" id="IPR036251">
    <property type="entry name" value="Arg_repress_C_sf"/>
</dbReference>
<dbReference type="InterPro" id="IPR020900">
    <property type="entry name" value="Arg_repress_DNA-bd"/>
</dbReference>
<dbReference type="InterPro" id="IPR036388">
    <property type="entry name" value="WH-like_DNA-bd_sf"/>
</dbReference>
<dbReference type="InterPro" id="IPR036390">
    <property type="entry name" value="WH_DNA-bd_sf"/>
</dbReference>
<dbReference type="NCBIfam" id="TIGR01529">
    <property type="entry name" value="argR_whole"/>
    <property type="match status" value="1"/>
</dbReference>
<dbReference type="PANTHER" id="PTHR34471">
    <property type="entry name" value="ARGININE REPRESSOR"/>
    <property type="match status" value="1"/>
</dbReference>
<dbReference type="PANTHER" id="PTHR34471:SF1">
    <property type="entry name" value="ARGININE REPRESSOR"/>
    <property type="match status" value="1"/>
</dbReference>
<dbReference type="Pfam" id="PF01316">
    <property type="entry name" value="Arg_repressor"/>
    <property type="match status" value="1"/>
</dbReference>
<dbReference type="Pfam" id="PF02863">
    <property type="entry name" value="Arg_repressor_C"/>
    <property type="match status" value="1"/>
</dbReference>
<dbReference type="PRINTS" id="PR01467">
    <property type="entry name" value="ARGREPRESSOR"/>
</dbReference>
<dbReference type="SUPFAM" id="SSF55252">
    <property type="entry name" value="C-terminal domain of arginine repressor"/>
    <property type="match status" value="1"/>
</dbReference>
<dbReference type="SUPFAM" id="SSF46785">
    <property type="entry name" value="Winged helix' DNA-binding domain"/>
    <property type="match status" value="1"/>
</dbReference>
<organism>
    <name type="scientific">Streptococcus equi subsp. zooepidemicus (strain H70)</name>
    <dbReference type="NCBI Taxonomy" id="553483"/>
    <lineage>
        <taxon>Bacteria</taxon>
        <taxon>Bacillati</taxon>
        <taxon>Bacillota</taxon>
        <taxon>Bacilli</taxon>
        <taxon>Lactobacillales</taxon>
        <taxon>Streptococcaceae</taxon>
        <taxon>Streptococcus</taxon>
    </lineage>
</organism>
<name>ARGR_STRS7</name>
<feature type="chain" id="PRO_1000203720" description="Arginine repressor">
    <location>
        <begin position="1"/>
        <end position="145"/>
    </location>
</feature>
<protein>
    <recommendedName>
        <fullName evidence="1">Arginine repressor</fullName>
    </recommendedName>
</protein>
<sequence length="145" mass="16317">MNKIERQQQIKQLIQAEHIGTQEEIRRLLQKDGIVVTQATLSRDLREIGLLKLRDDRGKLYYSLSEPVATPFSPDVRFYVLKVDRAGFMLVLHTNLGEADVLANLIDNDAIEDVLGTIAGADTLLVICRDEEIAKRFEKDLAAGL</sequence>